<reference key="1">
    <citation type="journal article" date="1987" name="J. Bacteriol.">
        <title>Streptococcus pyogenes type 12 M protein gene regulation by upstream sequences.</title>
        <authorList>
            <person name="Robbins J.C."/>
            <person name="Spanier J.G."/>
            <person name="Jones S.J."/>
            <person name="Simpson W.J."/>
            <person name="Cleary P.P."/>
        </authorList>
    </citation>
    <scope>NUCLEOTIDE SEQUENCE [GENOMIC DNA]</scope>
    <source>
        <strain>CS24 / Serotype M12</strain>
    </source>
</reference>
<reference key="2">
    <citation type="journal article" date="1994" name="Mol. Microbiol.">
        <title>Non-congruent relationships between variation in emm gene sequences and the population genetic structure of group A streptococci.</title>
        <authorList>
            <person name="Whatmore A.M."/>
            <person name="Kapur V."/>
            <person name="Sullivan D.J."/>
            <person name="Musser J.M."/>
            <person name="Kehoe M.A."/>
        </authorList>
    </citation>
    <scope>NUCLEOTIDE SEQUENCE [GENOMIC DNA] OF 13-111</scope>
</reference>
<reference key="3">
    <citation type="journal article" date="1989" name="Infect. Immun.">
        <title>Vimentin-cross-reactive epitope of type 12 streptococcal M protein.</title>
        <authorList>
            <person name="Kraus W."/>
            <person name="Seyer J.M."/>
            <person name="Beachey E.H."/>
        </authorList>
    </citation>
    <scope>PROTEIN SEQUENCE OF 42-54</scope>
</reference>
<accession>P19401</accession>
<accession>Q6LCZ1</accession>
<protein>
    <recommendedName>
        <fullName>M protein, serotype 12</fullName>
    </recommendedName>
</protein>
<gene>
    <name type="primary">emm12</name>
</gene>
<comment type="function">
    <text>This protein is one of the different antigenic serotypes of protein M. Protein M is closely associated with virulence of the bacterium and can render the organism resistant to phagocytosis.</text>
</comment>
<comment type="subcellular location">
    <subcellularLocation>
        <location evidence="2">Secreted</location>
        <location evidence="2">Cell wall</location>
        <topology evidence="2">Peptidoglycan-anchor</topology>
    </subcellularLocation>
</comment>
<comment type="similarity">
    <text evidence="7">Belongs to the M protein family.</text>
</comment>
<proteinExistence type="evidence at protein level"/>
<organism>
    <name type="scientific">Streptococcus pyogenes</name>
    <dbReference type="NCBI Taxonomy" id="1314"/>
    <lineage>
        <taxon>Bacteria</taxon>
        <taxon>Bacillati</taxon>
        <taxon>Bacillota</taxon>
        <taxon>Bacilli</taxon>
        <taxon>Lactobacillales</taxon>
        <taxon>Streptococcaceae</taxon>
        <taxon>Streptococcus</taxon>
    </lineage>
</organism>
<keyword id="KW-0134">Cell wall</keyword>
<keyword id="KW-0175">Coiled coil</keyword>
<keyword id="KW-0903">Direct protein sequencing</keyword>
<keyword id="KW-0572">Peptidoglycan-anchor</keyword>
<keyword id="KW-0581">Phagocytosis</keyword>
<keyword id="KW-0677">Repeat</keyword>
<keyword id="KW-0964">Secreted</keyword>
<keyword id="KW-0732">Signal</keyword>
<keyword id="KW-0843">Virulence</keyword>
<feature type="signal peptide" evidence="6">
    <location>
        <begin position="1"/>
        <end position="41"/>
    </location>
</feature>
<feature type="chain" id="PRO_0000005621" description="M protein, serotype 12">
    <location>
        <begin position="42"/>
        <end position="545"/>
    </location>
</feature>
<feature type="propeptide" id="PRO_0000005622" description="Removed by sortase" evidence="2">
    <location>
        <begin position="546"/>
        <end position="564" status="greater than"/>
    </location>
</feature>
<feature type="repeat" description="C 1" evidence="3">
    <location>
        <begin position="285"/>
        <end position="319"/>
    </location>
</feature>
<feature type="repeat" description="C 2" evidence="3">
    <location>
        <begin position="327"/>
        <end position="361"/>
    </location>
</feature>
<feature type="repeat" description="C 3" evidence="3">
    <location>
        <begin position="363"/>
        <end position="397"/>
    </location>
</feature>
<feature type="repeat" description="C 4" evidence="3">
    <location>
        <begin position="405"/>
        <end position="439"/>
    </location>
</feature>
<feature type="repeat" description="D 1" evidence="4">
    <location>
        <begin position="472"/>
        <end position="477"/>
    </location>
</feature>
<feature type="repeat" description="D 2" evidence="4">
    <location>
        <begin position="478"/>
        <end position="483"/>
    </location>
</feature>
<feature type="repeat" description="D 3" evidence="4">
    <location>
        <begin position="486"/>
        <end position="491"/>
    </location>
</feature>
<feature type="repeat" description="D 4" evidence="4">
    <location>
        <begin position="493"/>
        <end position="498"/>
    </location>
</feature>
<feature type="region of interest" description="Disordered" evidence="5">
    <location>
        <begin position="372"/>
        <end position="391"/>
    </location>
</feature>
<feature type="region of interest" description="Disordered" evidence="5">
    <location>
        <begin position="404"/>
        <end position="438"/>
    </location>
</feature>
<feature type="region of interest" description="Disordered" evidence="5">
    <location>
        <begin position="493"/>
        <end position="550"/>
    </location>
</feature>
<feature type="coiled-coil region" evidence="1">
    <location>
        <begin position="44"/>
        <end position="505"/>
    </location>
</feature>
<feature type="short sequence motif" description="LPXTG sorting signal" evidence="2">
    <location>
        <begin position="542"/>
        <end position="546"/>
    </location>
</feature>
<feature type="compositionally biased region" description="Basic and acidic residues" evidence="5">
    <location>
        <begin position="404"/>
        <end position="413"/>
    </location>
</feature>
<feature type="compositionally biased region" description="Basic and acidic residues" evidence="5">
    <location>
        <begin position="421"/>
        <end position="438"/>
    </location>
</feature>
<feature type="modified residue" description="Pentaglycyl murein peptidoglycan amidated threonine" evidence="2">
    <location>
        <position position="545"/>
    </location>
</feature>
<feature type="non-terminal residue">
    <location>
        <position position="564"/>
    </location>
</feature>
<name>M12_STRPY</name>
<dbReference type="EMBL" id="M18269">
    <property type="protein sequence ID" value="AAA88573.1"/>
    <property type="molecule type" value="Genomic_DNA"/>
</dbReference>
<dbReference type="EMBL" id="U11937">
    <property type="protein sequence ID" value="AAA99553.1"/>
    <property type="molecule type" value="Genomic_DNA"/>
</dbReference>
<dbReference type="PIR" id="A40174">
    <property type="entry name" value="A60115"/>
</dbReference>
<dbReference type="SMR" id="P19401"/>
<dbReference type="eggNOG" id="COG1196">
    <property type="taxonomic scope" value="Bacteria"/>
</dbReference>
<dbReference type="GO" id="GO:0005737">
    <property type="term" value="C:cytoplasm"/>
    <property type="evidence" value="ECO:0007669"/>
    <property type="project" value="TreeGrafter"/>
</dbReference>
<dbReference type="GO" id="GO:0005576">
    <property type="term" value="C:extracellular region"/>
    <property type="evidence" value="ECO:0007669"/>
    <property type="project" value="UniProtKB-KW"/>
</dbReference>
<dbReference type="GO" id="GO:0032982">
    <property type="term" value="C:myosin filament"/>
    <property type="evidence" value="ECO:0007669"/>
    <property type="project" value="TreeGrafter"/>
</dbReference>
<dbReference type="GO" id="GO:0016460">
    <property type="term" value="C:myosin II complex"/>
    <property type="evidence" value="ECO:0007669"/>
    <property type="project" value="TreeGrafter"/>
</dbReference>
<dbReference type="GO" id="GO:0051015">
    <property type="term" value="F:actin filament binding"/>
    <property type="evidence" value="ECO:0007669"/>
    <property type="project" value="TreeGrafter"/>
</dbReference>
<dbReference type="GO" id="GO:0000146">
    <property type="term" value="F:microfilament motor activity"/>
    <property type="evidence" value="ECO:0007669"/>
    <property type="project" value="TreeGrafter"/>
</dbReference>
<dbReference type="GO" id="GO:0006909">
    <property type="term" value="P:phagocytosis"/>
    <property type="evidence" value="ECO:0007669"/>
    <property type="project" value="UniProtKB-KW"/>
</dbReference>
<dbReference type="Gene3D" id="6.10.250.460">
    <property type="match status" value="4"/>
</dbReference>
<dbReference type="InterPro" id="IPR019931">
    <property type="entry name" value="LPXTG_anchor"/>
</dbReference>
<dbReference type="InterPro" id="IPR019950">
    <property type="entry name" value="M_anchor"/>
</dbReference>
<dbReference type="InterPro" id="IPR049896">
    <property type="entry name" value="SMCR"/>
</dbReference>
<dbReference type="InterPro" id="IPR049895">
    <property type="entry name" value="SMDRR"/>
</dbReference>
<dbReference type="InterPro" id="IPR005877">
    <property type="entry name" value="YSIRK_signal_dom"/>
</dbReference>
<dbReference type="NCBIfam" id="NF033777">
    <property type="entry name" value="M_group_A_cterm"/>
    <property type="match status" value="1"/>
</dbReference>
<dbReference type="NCBIfam" id="TIGR01168">
    <property type="entry name" value="YSIRK_signal"/>
    <property type="match status" value="1"/>
</dbReference>
<dbReference type="PANTHER" id="PTHR45615">
    <property type="entry name" value="MYOSIN HEAVY CHAIN, NON-MUSCLE"/>
    <property type="match status" value="1"/>
</dbReference>
<dbReference type="PANTHER" id="PTHR45615:SF40">
    <property type="entry name" value="MYOSIN HEAVY CHAIN, NON-MUSCLE"/>
    <property type="match status" value="1"/>
</dbReference>
<dbReference type="Pfam" id="PF00746">
    <property type="entry name" value="Gram_pos_anchor"/>
    <property type="match status" value="1"/>
</dbReference>
<dbReference type="Pfam" id="PF04650">
    <property type="entry name" value="YSIRK_signal"/>
    <property type="match status" value="1"/>
</dbReference>
<dbReference type="PRINTS" id="PR00015">
    <property type="entry name" value="GPOSANCHOR"/>
</dbReference>
<dbReference type="PROSITE" id="PS50847">
    <property type="entry name" value="GRAM_POS_ANCHORING"/>
    <property type="match status" value="1"/>
</dbReference>
<dbReference type="PROSITE" id="PS52028">
    <property type="entry name" value="SMCR"/>
    <property type="match status" value="4"/>
</dbReference>
<dbReference type="PROSITE" id="PS52030">
    <property type="entry name" value="SMDRR"/>
    <property type="match status" value="1"/>
</dbReference>
<evidence type="ECO:0000255" key="1"/>
<evidence type="ECO:0000255" key="2">
    <source>
        <dbReference type="PROSITE-ProRule" id="PRU00477"/>
    </source>
</evidence>
<evidence type="ECO:0000255" key="3">
    <source>
        <dbReference type="PROSITE-ProRule" id="PRU01372"/>
    </source>
</evidence>
<evidence type="ECO:0000255" key="4">
    <source>
        <dbReference type="PROSITE-ProRule" id="PRU01374"/>
    </source>
</evidence>
<evidence type="ECO:0000256" key="5">
    <source>
        <dbReference type="SAM" id="MobiDB-lite"/>
    </source>
</evidence>
<evidence type="ECO:0000269" key="6">
    <source>
    </source>
</evidence>
<evidence type="ECO:0000305" key="7"/>
<sequence length="564" mass="62904">MAKNTTNRHYSLRKLKTGTASVAVALTVVGAGLVAGQTVRADHSDLVAEKQRLEDLGQKFERLKQRSELYLQQYYDNKSNGYKGDWYVQQLKMLNRDLEQAYNELSGEAHKDALGKLGIDNADLKAKITELEKSVEEKNDVLSQIKKELEEAEKDIQFGREVHAADLLRHKQEIAEKENVISKLNGELQPLKQKVDETDRNLQQEKQKVLSLEQQLAVTKENAKKDFELAALGHQLADKEYNAKIAELESKLADAKKDFELAALGHQHAHNEYQAKLAEKDGQIKQLEEQKQILDASRKGTARDLEAVRQAKKATEAELNNLKAELAKVTEQKQILDASRKGTARDLEAVRKSKKQQVEAALKQLEEQNKISEASRKGLRRDLDTSREAKKQVEKDLANLTAELDKVKEEKQISDASRQGLRRDLDASREAKKQVEKALEEANSKLAALEKLNKDLEESKKLTEKEKAELQAKLEAEAKALKEQLAKQAEELAKLRAGKASDSQTPDAKPGNKAVPGKGQAPQAGTKPNQNKAPMKETKRQLPSTGETANPFFTAAALTVMAAA</sequence>